<dbReference type="EMBL" id="AM774415">
    <property type="protein sequence ID" value="CAP13195.1"/>
    <property type="molecule type" value="Genomic_DNA"/>
</dbReference>
<dbReference type="SMR" id="B0R383"/>
<dbReference type="EnsemblBacteria" id="CAP13195">
    <property type="protein sequence ID" value="CAP13195"/>
    <property type="gene ID" value="OE_1559R"/>
</dbReference>
<dbReference type="KEGG" id="hsl:OE_1559R"/>
<dbReference type="HOGENOM" id="CLU_024865_0_1_2"/>
<dbReference type="PhylomeDB" id="B0R383"/>
<dbReference type="Proteomes" id="UP000001321">
    <property type="component" value="Chromosome"/>
</dbReference>
<dbReference type="GO" id="GO:0032153">
    <property type="term" value="C:cell division site"/>
    <property type="evidence" value="ECO:0007669"/>
    <property type="project" value="UniProtKB-UniRule"/>
</dbReference>
<dbReference type="GO" id="GO:0005737">
    <property type="term" value="C:cytoplasm"/>
    <property type="evidence" value="ECO:0007669"/>
    <property type="project" value="UniProtKB-SubCell"/>
</dbReference>
<dbReference type="GO" id="GO:0005525">
    <property type="term" value="F:GTP binding"/>
    <property type="evidence" value="ECO:0007669"/>
    <property type="project" value="UniProtKB-UniRule"/>
</dbReference>
<dbReference type="GO" id="GO:0003924">
    <property type="term" value="F:GTPase activity"/>
    <property type="evidence" value="ECO:0007669"/>
    <property type="project" value="UniProtKB-UniRule"/>
</dbReference>
<dbReference type="GO" id="GO:0043093">
    <property type="term" value="P:FtsZ-dependent cytokinesis"/>
    <property type="evidence" value="ECO:0007669"/>
    <property type="project" value="UniProtKB-UniRule"/>
</dbReference>
<dbReference type="GO" id="GO:0051258">
    <property type="term" value="P:protein polymerization"/>
    <property type="evidence" value="ECO:0007669"/>
    <property type="project" value="UniProtKB-UniRule"/>
</dbReference>
<dbReference type="CDD" id="cd02201">
    <property type="entry name" value="FtsZ_type1"/>
    <property type="match status" value="1"/>
</dbReference>
<dbReference type="FunFam" id="3.40.50.1440:FF:000023">
    <property type="entry name" value="Cell division protein FtsZ"/>
    <property type="match status" value="1"/>
</dbReference>
<dbReference type="Gene3D" id="3.40.50.1440">
    <property type="entry name" value="Tubulin/FtsZ, GTPase domain"/>
    <property type="match status" value="1"/>
</dbReference>
<dbReference type="HAMAP" id="MF_00909">
    <property type="entry name" value="FtsZ"/>
    <property type="match status" value="1"/>
</dbReference>
<dbReference type="InterPro" id="IPR000158">
    <property type="entry name" value="Cell_div_FtsZ"/>
</dbReference>
<dbReference type="InterPro" id="IPR020805">
    <property type="entry name" value="Cell_div_FtsZ_CS"/>
</dbReference>
<dbReference type="InterPro" id="IPR045061">
    <property type="entry name" value="FtsZ/CetZ"/>
</dbReference>
<dbReference type="InterPro" id="IPR024757">
    <property type="entry name" value="FtsZ_C"/>
</dbReference>
<dbReference type="InterPro" id="IPR008280">
    <property type="entry name" value="Tub_FtsZ_C"/>
</dbReference>
<dbReference type="InterPro" id="IPR018316">
    <property type="entry name" value="Tubulin/FtsZ_2-layer-sand-dom"/>
</dbReference>
<dbReference type="InterPro" id="IPR036525">
    <property type="entry name" value="Tubulin/FtsZ_GTPase_sf"/>
</dbReference>
<dbReference type="InterPro" id="IPR003008">
    <property type="entry name" value="Tubulin_FtsZ_GTPase"/>
</dbReference>
<dbReference type="NCBIfam" id="TIGR00065">
    <property type="entry name" value="ftsZ"/>
    <property type="match status" value="1"/>
</dbReference>
<dbReference type="PANTHER" id="PTHR30314">
    <property type="entry name" value="CELL DIVISION PROTEIN FTSZ-RELATED"/>
    <property type="match status" value="1"/>
</dbReference>
<dbReference type="PANTHER" id="PTHR30314:SF3">
    <property type="entry name" value="MITOCHONDRIAL DIVISION PROTEIN FSZA"/>
    <property type="match status" value="1"/>
</dbReference>
<dbReference type="Pfam" id="PF12327">
    <property type="entry name" value="FtsZ_C"/>
    <property type="match status" value="1"/>
</dbReference>
<dbReference type="Pfam" id="PF00091">
    <property type="entry name" value="Tubulin"/>
    <property type="match status" value="1"/>
</dbReference>
<dbReference type="PRINTS" id="PR00423">
    <property type="entry name" value="CELLDVISFTSZ"/>
</dbReference>
<dbReference type="SMART" id="SM00864">
    <property type="entry name" value="Tubulin"/>
    <property type="match status" value="1"/>
</dbReference>
<dbReference type="SMART" id="SM00865">
    <property type="entry name" value="Tubulin_C"/>
    <property type="match status" value="1"/>
</dbReference>
<dbReference type="SUPFAM" id="SSF55307">
    <property type="entry name" value="Tubulin C-terminal domain-like"/>
    <property type="match status" value="1"/>
</dbReference>
<dbReference type="SUPFAM" id="SSF52490">
    <property type="entry name" value="Tubulin nucleotide-binding domain-like"/>
    <property type="match status" value="1"/>
</dbReference>
<dbReference type="PROSITE" id="PS01134">
    <property type="entry name" value="FTSZ_1"/>
    <property type="match status" value="1"/>
</dbReference>
<dbReference type="PROSITE" id="PS01135">
    <property type="entry name" value="FTSZ_2"/>
    <property type="match status" value="1"/>
</dbReference>
<organism>
    <name type="scientific">Halobacterium salinarum (strain ATCC 29341 / DSM 671 / R1)</name>
    <dbReference type="NCBI Taxonomy" id="478009"/>
    <lineage>
        <taxon>Archaea</taxon>
        <taxon>Methanobacteriati</taxon>
        <taxon>Methanobacteriota</taxon>
        <taxon>Stenosarchaea group</taxon>
        <taxon>Halobacteria</taxon>
        <taxon>Halobacteriales</taxon>
        <taxon>Halobacteriaceae</taxon>
        <taxon>Halobacterium</taxon>
        <taxon>Halobacterium salinarum NRC-34001</taxon>
    </lineage>
</organism>
<sequence length="396" mass="41188">MDSIVQDAIDEAEESEDSASEPADVAGGGGDTVPTGTMTDNELEDVLQELQTNITVVGCGGAGSNTVDRMATEGIHGADLVAANTDVQHLVDIEADTKILMGQQKTKGRGAGSLPQVGEEAAIESQGEIRDSIAGSDMVFVTAGLGGGTGTGSAPVVAKAAREQGALTIAIVTTPFTAEGEVRRTNAEAGLERLRDVADTVIVVPNDRLLDSVGKLPVREAFKVSDEVLMRSVKGITELITKPGLVNLDFADVRTVMEKGGVAMIGLGEADSDAKAADSVQSALRSPLLDVDISSANSALVNVTGGPGMSIEEAEGVVEQLYDRIDPDARIIWGTSIDEQIQEEMRTMVVVTGVDSPQIYGRNEAAEGDGPAQESTPEPEPEPQAGSEIEDIDYVE</sequence>
<proteinExistence type="inferred from homology"/>
<name>FTSZ1_HALS3</name>
<gene>
    <name evidence="1" type="primary">ftsZ1</name>
    <name type="ordered locus">OE_1559R</name>
</gene>
<accession>B0R383</accession>
<keyword id="KW-0131">Cell cycle</keyword>
<keyword id="KW-0132">Cell division</keyword>
<keyword id="KW-0963">Cytoplasm</keyword>
<keyword id="KW-0342">GTP-binding</keyword>
<keyword id="KW-0547">Nucleotide-binding</keyword>
<keyword id="KW-0717">Septation</keyword>
<protein>
    <recommendedName>
        <fullName evidence="1">Cell division protein FtsZ 1</fullName>
    </recommendedName>
</protein>
<evidence type="ECO:0000255" key="1">
    <source>
        <dbReference type="HAMAP-Rule" id="MF_00909"/>
    </source>
</evidence>
<evidence type="ECO:0000256" key="2">
    <source>
        <dbReference type="SAM" id="MobiDB-lite"/>
    </source>
</evidence>
<feature type="chain" id="PRO_0000414240" description="Cell division protein FtsZ 1">
    <location>
        <begin position="1"/>
        <end position="396"/>
    </location>
</feature>
<feature type="region of interest" description="Disordered" evidence="2">
    <location>
        <begin position="1"/>
        <end position="38"/>
    </location>
</feature>
<feature type="region of interest" description="Disordered" evidence="2">
    <location>
        <begin position="358"/>
        <end position="396"/>
    </location>
</feature>
<feature type="compositionally biased region" description="Acidic residues" evidence="2">
    <location>
        <begin position="8"/>
        <end position="19"/>
    </location>
</feature>
<feature type="binding site" evidence="1">
    <location>
        <begin position="61"/>
        <end position="65"/>
    </location>
    <ligand>
        <name>GTP</name>
        <dbReference type="ChEBI" id="CHEBI:37565"/>
    </ligand>
</feature>
<feature type="binding site" evidence="1">
    <location>
        <begin position="148"/>
        <end position="150"/>
    </location>
    <ligand>
        <name>GTP</name>
        <dbReference type="ChEBI" id="CHEBI:37565"/>
    </ligand>
</feature>
<feature type="binding site" evidence="1">
    <location>
        <position position="179"/>
    </location>
    <ligand>
        <name>GTP</name>
        <dbReference type="ChEBI" id="CHEBI:37565"/>
    </ligand>
</feature>
<feature type="binding site" evidence="1">
    <location>
        <position position="183"/>
    </location>
    <ligand>
        <name>GTP</name>
        <dbReference type="ChEBI" id="CHEBI:37565"/>
    </ligand>
</feature>
<feature type="binding site" evidence="1">
    <location>
        <position position="226"/>
    </location>
    <ligand>
        <name>GTP</name>
        <dbReference type="ChEBI" id="CHEBI:37565"/>
    </ligand>
</feature>
<reference key="1">
    <citation type="journal article" date="2008" name="Genomics">
        <title>Evolution in the laboratory: the genome of Halobacterium salinarum strain R1 compared to that of strain NRC-1.</title>
        <authorList>
            <person name="Pfeiffer F."/>
            <person name="Schuster S.C."/>
            <person name="Broicher A."/>
            <person name="Falb M."/>
            <person name="Palm P."/>
            <person name="Rodewald K."/>
            <person name="Ruepp A."/>
            <person name="Soppa J."/>
            <person name="Tittor J."/>
            <person name="Oesterhelt D."/>
        </authorList>
    </citation>
    <scope>NUCLEOTIDE SEQUENCE [LARGE SCALE GENOMIC DNA]</scope>
    <source>
        <strain>ATCC 29341 / DSM 671 / R1</strain>
    </source>
</reference>
<comment type="function">
    <text evidence="1">Essential cell division protein that forms a contractile ring structure (Z ring) at the future cell division site. The regulation of the ring assembly controls the timing and the location of cell division. One of the functions of the FtsZ ring is to recruit other cell division proteins to the septum to produce a new cell wall between the dividing cells. Binds GTP and shows GTPase activity.</text>
</comment>
<comment type="subunit">
    <text evidence="1">Homodimer. Polymerizes to form a dynamic ring structure in a strictly GTP-dependent manner. Interacts directly with several other division proteins.</text>
</comment>
<comment type="subcellular location">
    <subcellularLocation>
        <location evidence="1">Cytoplasm</location>
    </subcellularLocation>
    <text evidence="1">Assembles at midcell at the inner surface of the cytoplasmic membrane.</text>
</comment>
<comment type="similarity">
    <text evidence="1">Belongs to the FtsZ family.</text>
</comment>